<evidence type="ECO:0000250" key="1"/>
<evidence type="ECO:0000256" key="2">
    <source>
        <dbReference type="SAM" id="MobiDB-lite"/>
    </source>
</evidence>
<evidence type="ECO:0000305" key="3"/>
<name>CN10A_XENLA</name>
<sequence>MAADKAGEQGAEKHEDSANCSGISDHEKELSRSALQAFTAGNYEACLQHLGELKEINKDDYKVILNSAVAEFYKSDQTTTDLLKQTLNQLRNEVHSAIDEIDSLDDVENSMLYYNQAVILYYLRQHMEAISIGEKLYQFIEPFKEKFAHAVCFLLVDLYLLTFQTEKALHLLVVLEKMILQGHSNNKNGKNNETNSNANNREPFAQRGDGGVHVEAAKSKIHQYKVRAYIQMKSLKACKREIKSVMNTSGNSAPSLFLKSNFEYLRGNYRKAVKLLNSSNIAEYPGFMKTGECVRCMFWNNLGCIHFAMGKHNLGLFYFKKALQENDNTCAQLPSSNTDPGKKFSSRPMCTLLTNKRYELLYNCGIQLLHIGRPLAAFEYLIEAVQVYHSNPRLWLRLAECCIAANKGTSEQETKGLPSKKGIVQSIVGQGYHRKIVLASQSVQNLLYNDGESSAIPVASMEFAAICLRNALLLLPEDQFDAKQENGSKTSSQTGNTDSGGESSEVCSNKSHEGDKFIPAPPSSPLKRQEVENLRCSVLACSAYVGLALGDNLMALNHAEKLLQQPRLSGSLKFLGHLYAAEALISLDRISDAITHLNPENVTDVSLGVSSNEQEQGSDKGENEPMESVGKQMPQCYPSSVTSARTMMLFNLGSAYCLRSEYDKARKCLHQAASMIHPKEIPPEAILLAVYLELQNGNTQLALQIIKRNQLLPSIRMMSDLRKKPLFQTMHQPMQPIQMPAFTAVQRK</sequence>
<dbReference type="EMBL" id="BC077237">
    <property type="protein sequence ID" value="AAH77237.1"/>
    <property type="molecule type" value="mRNA"/>
</dbReference>
<dbReference type="RefSeq" id="NP_001086651.1">
    <property type="nucleotide sequence ID" value="NM_001093182.1"/>
</dbReference>
<dbReference type="SMR" id="Q6DE97"/>
<dbReference type="BioGRID" id="103346">
    <property type="interactions" value="1"/>
</dbReference>
<dbReference type="IntAct" id="Q6DE97">
    <property type="interactions" value="2"/>
</dbReference>
<dbReference type="DNASU" id="446486"/>
<dbReference type="GeneID" id="446486"/>
<dbReference type="KEGG" id="xla:446486"/>
<dbReference type="AGR" id="Xenbase:XB-GENE-6256689"/>
<dbReference type="CTD" id="446486"/>
<dbReference type="Xenbase" id="XB-GENE-6256689">
    <property type="gene designation" value="cnot10.L"/>
</dbReference>
<dbReference type="OrthoDB" id="25157at2759"/>
<dbReference type="Proteomes" id="UP000186698">
    <property type="component" value="Chromosome 6L"/>
</dbReference>
<dbReference type="Bgee" id="446486">
    <property type="expression patterns" value="Expressed in gastrula and 19 other cell types or tissues"/>
</dbReference>
<dbReference type="GO" id="GO:0030014">
    <property type="term" value="C:CCR4-NOT complex"/>
    <property type="evidence" value="ECO:0000250"/>
    <property type="project" value="UniProtKB"/>
</dbReference>
<dbReference type="GO" id="GO:0005737">
    <property type="term" value="C:cytoplasm"/>
    <property type="evidence" value="ECO:0007669"/>
    <property type="project" value="UniProtKB-SubCell"/>
</dbReference>
<dbReference type="GO" id="GO:0005634">
    <property type="term" value="C:nucleus"/>
    <property type="evidence" value="ECO:0007669"/>
    <property type="project" value="UniProtKB-SubCell"/>
</dbReference>
<dbReference type="GO" id="GO:0006402">
    <property type="term" value="P:mRNA catabolic process"/>
    <property type="evidence" value="ECO:0000318"/>
    <property type="project" value="GO_Central"/>
</dbReference>
<dbReference type="GO" id="GO:0017148">
    <property type="term" value="P:negative regulation of translation"/>
    <property type="evidence" value="ECO:0000318"/>
    <property type="project" value="GO_Central"/>
</dbReference>
<dbReference type="GO" id="GO:0031047">
    <property type="term" value="P:regulatory ncRNA-mediated gene silencing"/>
    <property type="evidence" value="ECO:0007669"/>
    <property type="project" value="UniProtKB-KW"/>
</dbReference>
<dbReference type="FunFam" id="1.25.40.10:FF:000092">
    <property type="entry name" value="CCR4-NOT transcription complex subunit 10 isoform X1"/>
    <property type="match status" value="1"/>
</dbReference>
<dbReference type="Gene3D" id="1.25.40.10">
    <property type="entry name" value="Tetratricopeptide repeat domain"/>
    <property type="match status" value="2"/>
</dbReference>
<dbReference type="InterPro" id="IPR039740">
    <property type="entry name" value="CNOT10"/>
</dbReference>
<dbReference type="InterPro" id="IPR011990">
    <property type="entry name" value="TPR-like_helical_dom_sf"/>
</dbReference>
<dbReference type="InterPro" id="IPR019734">
    <property type="entry name" value="TPR_rpt"/>
</dbReference>
<dbReference type="PANTHER" id="PTHR12979">
    <property type="entry name" value="CCR4-NOT TRANSCRIPTION COMPLEX SUBUNIT 10"/>
    <property type="match status" value="1"/>
</dbReference>
<dbReference type="PANTHER" id="PTHR12979:SF5">
    <property type="entry name" value="CCR4-NOT TRANSCRIPTION COMPLEX SUBUNIT 10"/>
    <property type="match status" value="1"/>
</dbReference>
<dbReference type="SMART" id="SM00028">
    <property type="entry name" value="TPR"/>
    <property type="match status" value="5"/>
</dbReference>
<dbReference type="SUPFAM" id="SSF48452">
    <property type="entry name" value="TPR-like"/>
    <property type="match status" value="1"/>
</dbReference>
<protein>
    <recommendedName>
        <fullName>CCR4-NOT transcription complex subunit 10-A</fullName>
    </recommendedName>
</protein>
<keyword id="KW-0963">Cytoplasm</keyword>
<keyword id="KW-0539">Nucleus</keyword>
<keyword id="KW-1185">Reference proteome</keyword>
<keyword id="KW-0943">RNA-mediated gene silencing</keyword>
<keyword id="KW-0804">Transcription</keyword>
<keyword id="KW-0805">Transcription regulation</keyword>
<keyword id="KW-0810">Translation regulation</keyword>
<accession>Q6DE97</accession>
<gene>
    <name type="primary">cnot10-a</name>
</gene>
<reference key="1">
    <citation type="submission" date="2004-07" db="EMBL/GenBank/DDBJ databases">
        <authorList>
            <consortium name="NIH - Xenopus Gene Collection (XGC) project"/>
        </authorList>
    </citation>
    <scope>NUCLEOTIDE SEQUENCE [LARGE SCALE MRNA]</scope>
    <source>
        <tissue>Ovary</tissue>
    </source>
</reference>
<comment type="function">
    <text evidence="1">Component of the CCR4-NOT complex which is one of the major cellular mRNA deadenylases and is linked to various cellular processes including bulk mRNA degradation, miRNA-mediated repression, translational repression during translational initiation and general transcription regulation. Additional complex functions may be a consequence of its influence on mRNA expression. Is not required for association of CNOT7 to the CCR4-NOT complex (By similarity).</text>
</comment>
<comment type="subunit">
    <text evidence="1">Component of the CCR4-NOT complex. cnot10 and cnot11 form a subcomplex docked to the cnot1 scaffold (By similarity).</text>
</comment>
<comment type="subcellular location">
    <subcellularLocation>
        <location evidence="1">Cytoplasm</location>
    </subcellularLocation>
    <subcellularLocation>
        <location evidence="1">Nucleus</location>
    </subcellularLocation>
</comment>
<comment type="similarity">
    <text evidence="3">Belongs to the CNOT10 family.</text>
</comment>
<organism>
    <name type="scientific">Xenopus laevis</name>
    <name type="common">African clawed frog</name>
    <dbReference type="NCBI Taxonomy" id="8355"/>
    <lineage>
        <taxon>Eukaryota</taxon>
        <taxon>Metazoa</taxon>
        <taxon>Chordata</taxon>
        <taxon>Craniata</taxon>
        <taxon>Vertebrata</taxon>
        <taxon>Euteleostomi</taxon>
        <taxon>Amphibia</taxon>
        <taxon>Batrachia</taxon>
        <taxon>Anura</taxon>
        <taxon>Pipoidea</taxon>
        <taxon>Pipidae</taxon>
        <taxon>Xenopodinae</taxon>
        <taxon>Xenopus</taxon>
        <taxon>Xenopus</taxon>
    </lineage>
</organism>
<proteinExistence type="evidence at transcript level"/>
<feature type="chain" id="PRO_0000314585" description="CCR4-NOT transcription complex subunit 10-A">
    <location>
        <begin position="1"/>
        <end position="748"/>
    </location>
</feature>
<feature type="region of interest" description="Disordered" evidence="2">
    <location>
        <begin position="1"/>
        <end position="25"/>
    </location>
</feature>
<feature type="region of interest" description="Disordered" evidence="2">
    <location>
        <begin position="184"/>
        <end position="205"/>
    </location>
</feature>
<feature type="region of interest" description="Disordered" evidence="2">
    <location>
        <begin position="483"/>
        <end position="524"/>
    </location>
</feature>
<feature type="region of interest" description="Disordered" evidence="2">
    <location>
        <begin position="605"/>
        <end position="635"/>
    </location>
</feature>
<feature type="compositionally biased region" description="Basic and acidic residues" evidence="2">
    <location>
        <begin position="1"/>
        <end position="17"/>
    </location>
</feature>
<feature type="compositionally biased region" description="Low complexity" evidence="2">
    <location>
        <begin position="185"/>
        <end position="200"/>
    </location>
</feature>
<feature type="compositionally biased region" description="Polar residues" evidence="2">
    <location>
        <begin position="487"/>
        <end position="509"/>
    </location>
</feature>
<feature type="compositionally biased region" description="Polar residues" evidence="2">
    <location>
        <begin position="605"/>
        <end position="615"/>
    </location>
</feature>